<protein>
    <recommendedName>
        <fullName evidence="1">Photosystem II reaction center protein Z</fullName>
        <shortName evidence="1">PSII-Z</shortName>
    </recommendedName>
</protein>
<sequence>MTIAFQLAVFALIATSSILLISVPVVFASPDGWLGNKNVVFSGTSLWITLVFLVGILNSLIS</sequence>
<feature type="chain" id="PRO_0000277223" description="Photosystem II reaction center protein Z">
    <location>
        <begin position="1"/>
        <end position="62"/>
    </location>
</feature>
<feature type="transmembrane region" description="Helical" evidence="1">
    <location>
        <begin position="8"/>
        <end position="28"/>
    </location>
</feature>
<feature type="transmembrane region" description="Helical" evidence="1">
    <location>
        <begin position="41"/>
        <end position="61"/>
    </location>
</feature>
<comment type="function">
    <text evidence="1">May control the interaction of photosystem II (PSII) cores with the light-harvesting antenna, regulates electron flow through the 2 photosystem reaction centers. PSII is a light-driven water plastoquinone oxidoreductase, using light energy to abstract electrons from H(2)O, generating a proton gradient subsequently used for ATP formation.</text>
</comment>
<comment type="subunit">
    <text evidence="1">PSII is composed of 1 copy each of membrane proteins PsbA, PsbB, PsbC, PsbD, PsbE, PsbF, PsbH, PsbI, PsbJ, PsbK, PsbL, PsbM, PsbT, PsbY, PsbZ, Psb30/Ycf12, at least 3 peripheral proteins of the oxygen-evolving complex and a large number of cofactors. It forms dimeric complexes.</text>
</comment>
<comment type="subcellular location">
    <subcellularLocation>
        <location evidence="1">Plastid</location>
        <location evidence="1">Chloroplast thylakoid membrane</location>
        <topology evidence="1">Multi-pass membrane protein</topology>
    </subcellularLocation>
</comment>
<comment type="similarity">
    <text evidence="1">Belongs to the PsbZ family.</text>
</comment>
<evidence type="ECO:0000255" key="1">
    <source>
        <dbReference type="HAMAP-Rule" id="MF_00644"/>
    </source>
</evidence>
<keyword id="KW-0150">Chloroplast</keyword>
<keyword id="KW-0472">Membrane</keyword>
<keyword id="KW-0602">Photosynthesis</keyword>
<keyword id="KW-0604">Photosystem II</keyword>
<keyword id="KW-0934">Plastid</keyword>
<keyword id="KW-0674">Reaction center</keyword>
<keyword id="KW-0793">Thylakoid</keyword>
<keyword id="KW-0812">Transmembrane</keyword>
<keyword id="KW-1133">Transmembrane helix</keyword>
<name>PSBZ_MORIN</name>
<proteinExistence type="inferred from homology"/>
<gene>
    <name evidence="1" type="primary">psbZ</name>
    <name type="ordered locus">MoinCp018</name>
</gene>
<geneLocation type="chloroplast"/>
<dbReference type="EMBL" id="DQ226511">
    <property type="protein sequence ID" value="ABB20955.1"/>
    <property type="molecule type" value="Genomic_DNA"/>
</dbReference>
<dbReference type="RefSeq" id="YP_762258.1">
    <property type="nucleotide sequence ID" value="NC_008359.1"/>
</dbReference>
<dbReference type="SMR" id="Q09X20"/>
<dbReference type="GeneID" id="4290564"/>
<dbReference type="GO" id="GO:0009535">
    <property type="term" value="C:chloroplast thylakoid membrane"/>
    <property type="evidence" value="ECO:0007669"/>
    <property type="project" value="UniProtKB-SubCell"/>
</dbReference>
<dbReference type="GO" id="GO:0009539">
    <property type="term" value="C:photosystem II reaction center"/>
    <property type="evidence" value="ECO:0007669"/>
    <property type="project" value="InterPro"/>
</dbReference>
<dbReference type="GO" id="GO:0015979">
    <property type="term" value="P:photosynthesis"/>
    <property type="evidence" value="ECO:0007669"/>
    <property type="project" value="UniProtKB-UniRule"/>
</dbReference>
<dbReference type="GO" id="GO:0042549">
    <property type="term" value="P:photosystem II stabilization"/>
    <property type="evidence" value="ECO:0007669"/>
    <property type="project" value="InterPro"/>
</dbReference>
<dbReference type="FunFam" id="1.10.287.740:FF:000001">
    <property type="entry name" value="Photosystem II reaction center protein Z"/>
    <property type="match status" value="1"/>
</dbReference>
<dbReference type="Gene3D" id="1.10.287.740">
    <property type="entry name" value="Photosystem II PsbZ, reaction centre"/>
    <property type="match status" value="1"/>
</dbReference>
<dbReference type="HAMAP" id="MF_00644">
    <property type="entry name" value="PSII_PsbZ"/>
    <property type="match status" value="1"/>
</dbReference>
<dbReference type="InterPro" id="IPR002644">
    <property type="entry name" value="PSII_PsbZ"/>
</dbReference>
<dbReference type="InterPro" id="IPR036512">
    <property type="entry name" value="PSII_PsbZ_sf"/>
</dbReference>
<dbReference type="NCBIfam" id="TIGR03043">
    <property type="entry name" value="PS_II_psbZ"/>
    <property type="match status" value="1"/>
</dbReference>
<dbReference type="PANTHER" id="PTHR34971">
    <property type="entry name" value="PHOTOSYSTEM II REACTION CENTER PROTEIN Z"/>
    <property type="match status" value="1"/>
</dbReference>
<dbReference type="PANTHER" id="PTHR34971:SF2">
    <property type="entry name" value="PHOTOSYSTEM II REACTION CENTER PROTEIN Z"/>
    <property type="match status" value="1"/>
</dbReference>
<dbReference type="Pfam" id="PF01737">
    <property type="entry name" value="Ycf9"/>
    <property type="match status" value="1"/>
</dbReference>
<dbReference type="SUPFAM" id="SSF161055">
    <property type="entry name" value="PsbZ-like"/>
    <property type="match status" value="1"/>
</dbReference>
<reference key="1">
    <citation type="submission" date="2005-09" db="EMBL/GenBank/DDBJ databases">
        <title>The chloroplast genome of mulberry: structural features and comparative analysis.</title>
        <authorList>
            <person name="Ravi V."/>
            <person name="Khurana J.P."/>
            <person name="Tyagi A.K."/>
            <person name="Khurana P."/>
        </authorList>
    </citation>
    <scope>NUCLEOTIDE SEQUENCE [LARGE SCALE GENOMIC DNA]</scope>
    <source>
        <strain>cv. K2</strain>
    </source>
</reference>
<accession>Q09X20</accession>
<organism>
    <name type="scientific">Morus indica</name>
    <name type="common">Mulberry</name>
    <dbReference type="NCBI Taxonomy" id="248361"/>
    <lineage>
        <taxon>Eukaryota</taxon>
        <taxon>Viridiplantae</taxon>
        <taxon>Streptophyta</taxon>
        <taxon>Embryophyta</taxon>
        <taxon>Tracheophyta</taxon>
        <taxon>Spermatophyta</taxon>
        <taxon>Magnoliopsida</taxon>
        <taxon>eudicotyledons</taxon>
        <taxon>Gunneridae</taxon>
        <taxon>Pentapetalae</taxon>
        <taxon>rosids</taxon>
        <taxon>fabids</taxon>
        <taxon>Rosales</taxon>
        <taxon>Moraceae</taxon>
        <taxon>Moreae</taxon>
        <taxon>Morus</taxon>
    </lineage>
</organism>